<evidence type="ECO:0000250" key="1">
    <source>
        <dbReference type="UniProtKB" id="Q9QZ88"/>
    </source>
</evidence>
<evidence type="ECO:0000250" key="2">
    <source>
        <dbReference type="UniProtKB" id="Q9UBQ0"/>
    </source>
</evidence>
<evidence type="ECO:0000305" key="3"/>
<proteinExistence type="evidence at transcript level"/>
<feature type="chain" id="PRO_0000339652" description="Vacuolar protein sorting-associated protein 29">
    <location>
        <begin position="1"/>
        <end position="182"/>
    </location>
</feature>
<gene>
    <name type="primary">vps29</name>
</gene>
<protein>
    <recommendedName>
        <fullName>Vacuolar protein sorting-associated protein 29</fullName>
    </recommendedName>
    <alternativeName>
        <fullName>Vesicle protein sorting 29</fullName>
    </alternativeName>
</protein>
<sequence>MLVLVLGDLHIPHRCNSLPAKFKKLLVPGKIQHILCTGNLCTKESFDYLKTLAGDVHIVRGDFDENLNYPEQKVVTVGQFKIGLIHGHQVIPWGDMASLALLQRQLDVDILISGHTQKFEAFEHENKFYINPGSATGAYNALENNIIPSFVLMDIQASTVVTYVYQLIGDDVKVERIEYKKS</sequence>
<reference key="1">
    <citation type="submission" date="2005-06" db="EMBL/GenBank/DDBJ databases">
        <authorList>
            <consortium name="NIH - Xenopus Gene Collection (XGC) project"/>
        </authorList>
    </citation>
    <scope>NUCLEOTIDE SEQUENCE [LARGE SCALE MRNA]</scope>
    <source>
        <tissue>Ovary</tissue>
        <tissue>Spleen</tissue>
    </source>
</reference>
<name>VPS29_XENLA</name>
<organism>
    <name type="scientific">Xenopus laevis</name>
    <name type="common">African clawed frog</name>
    <dbReference type="NCBI Taxonomy" id="8355"/>
    <lineage>
        <taxon>Eukaryota</taxon>
        <taxon>Metazoa</taxon>
        <taxon>Chordata</taxon>
        <taxon>Craniata</taxon>
        <taxon>Vertebrata</taxon>
        <taxon>Euteleostomi</taxon>
        <taxon>Amphibia</taxon>
        <taxon>Batrachia</taxon>
        <taxon>Anura</taxon>
        <taxon>Pipoidea</taxon>
        <taxon>Pipidae</taxon>
        <taxon>Xenopodinae</taxon>
        <taxon>Xenopus</taxon>
        <taxon>Xenopus</taxon>
    </lineage>
</organism>
<accession>Q6GP62</accession>
<keyword id="KW-0963">Cytoplasm</keyword>
<keyword id="KW-0967">Endosome</keyword>
<keyword id="KW-0472">Membrane</keyword>
<keyword id="KW-0479">Metal-binding</keyword>
<keyword id="KW-0653">Protein transport</keyword>
<keyword id="KW-1185">Reference proteome</keyword>
<keyword id="KW-0813">Transport</keyword>
<keyword id="KW-0862">Zinc</keyword>
<dbReference type="EMBL" id="BC073281">
    <property type="protein sequence ID" value="AAH73281.1"/>
    <property type="molecule type" value="mRNA"/>
</dbReference>
<dbReference type="EMBL" id="BC097520">
    <property type="protein sequence ID" value="AAH97520.1"/>
    <property type="molecule type" value="mRNA"/>
</dbReference>
<dbReference type="RefSeq" id="NP_001085746.1">
    <property type="nucleotide sequence ID" value="NM_001092277.1"/>
</dbReference>
<dbReference type="SMR" id="Q6GP62"/>
<dbReference type="DNASU" id="444173"/>
<dbReference type="GeneID" id="108716875"/>
<dbReference type="GeneID" id="444173"/>
<dbReference type="KEGG" id="xla:108716875"/>
<dbReference type="CTD" id="108716875"/>
<dbReference type="CTD" id="444173"/>
<dbReference type="OrthoDB" id="10258130at2759"/>
<dbReference type="Proteomes" id="UP000186698">
    <property type="component" value="Chromosome 1L"/>
</dbReference>
<dbReference type="Bgee" id="108716875">
    <property type="expression patterns" value="Expressed in brain and 20 other cell types or tissues"/>
</dbReference>
<dbReference type="GO" id="GO:0005829">
    <property type="term" value="C:cytosol"/>
    <property type="evidence" value="ECO:0007669"/>
    <property type="project" value="GOC"/>
</dbReference>
<dbReference type="GO" id="GO:0005768">
    <property type="term" value="C:endosome"/>
    <property type="evidence" value="ECO:0000318"/>
    <property type="project" value="GO_Central"/>
</dbReference>
<dbReference type="GO" id="GO:0010008">
    <property type="term" value="C:endosome membrane"/>
    <property type="evidence" value="ECO:0007669"/>
    <property type="project" value="UniProtKB-SubCell"/>
</dbReference>
<dbReference type="GO" id="GO:0030904">
    <property type="term" value="C:retromer complex"/>
    <property type="evidence" value="ECO:0000250"/>
    <property type="project" value="UniProtKB"/>
</dbReference>
<dbReference type="GO" id="GO:0046872">
    <property type="term" value="F:metal ion binding"/>
    <property type="evidence" value="ECO:0007669"/>
    <property type="project" value="UniProtKB-KW"/>
</dbReference>
<dbReference type="GO" id="GO:0032456">
    <property type="term" value="P:endocytic recycling"/>
    <property type="evidence" value="ECO:0000250"/>
    <property type="project" value="UniProtKB"/>
</dbReference>
<dbReference type="GO" id="GO:0006886">
    <property type="term" value="P:intracellular protein transport"/>
    <property type="evidence" value="ECO:0000318"/>
    <property type="project" value="GO_Central"/>
</dbReference>
<dbReference type="GO" id="GO:0042147">
    <property type="term" value="P:retrograde transport, endosome to Golgi"/>
    <property type="evidence" value="ECO:0000318"/>
    <property type="project" value="GO_Central"/>
</dbReference>
<dbReference type="CDD" id="cd07394">
    <property type="entry name" value="MPP_Vps29"/>
    <property type="match status" value="1"/>
</dbReference>
<dbReference type="FunFam" id="3.60.21.10:FF:000009">
    <property type="entry name" value="Vacuolar protein sorting-associated protein 29"/>
    <property type="match status" value="1"/>
</dbReference>
<dbReference type="Gene3D" id="3.60.21.10">
    <property type="match status" value="1"/>
</dbReference>
<dbReference type="InterPro" id="IPR024654">
    <property type="entry name" value="Calcineurin-like_PHP_lpxH"/>
</dbReference>
<dbReference type="InterPro" id="IPR029052">
    <property type="entry name" value="Metallo-depent_PP-like"/>
</dbReference>
<dbReference type="InterPro" id="IPR000979">
    <property type="entry name" value="Phosphodiesterase_MJ0936/Vps29"/>
</dbReference>
<dbReference type="InterPro" id="IPR028661">
    <property type="entry name" value="Vps29"/>
</dbReference>
<dbReference type="NCBIfam" id="TIGR00040">
    <property type="entry name" value="yfcE"/>
    <property type="match status" value="1"/>
</dbReference>
<dbReference type="PANTHER" id="PTHR11124">
    <property type="entry name" value="VACUOLAR SORTING PROTEIN VPS29"/>
    <property type="match status" value="1"/>
</dbReference>
<dbReference type="Pfam" id="PF12850">
    <property type="entry name" value="Metallophos_2"/>
    <property type="match status" value="1"/>
</dbReference>
<dbReference type="SUPFAM" id="SSF56300">
    <property type="entry name" value="Metallo-dependent phosphatases"/>
    <property type="match status" value="1"/>
</dbReference>
<comment type="function">
    <text evidence="2">Component of the commander complex that is essential for endosomal recycling of transmembrane cargos; the commander complex is composed of the CCC subcomplex and the retriever subcomplex (By similarity). Component of the retriever complex, which is a heterotrimeric complex related to retromer cargo-selective complex (CSC) and essential for retromer-independent retrieval and recycling of numerous cargos (By similarity). Component of the retromer cargo-selective complex (CSC). The CSC is believed to be the core functional component of retromer or respective retromer complex variants acting to prevent missorting of selected transmembrane cargo proteins into the lysosomal degradation pathway. In the endosomes, retriever complex drives the retrieval and recycling of NxxY-motif-containing cargo proteins by coupling to snx17, a cargo essential for the homeostatic maintenance of numerous cell surface proteins associated with processes that include cell migration, cell adhesion, nutrient supply and cell signaling (By similarity). The recruitment of the retriever complex to the endosomal membrane involves CCC and WASH complexes (By similarity).</text>
</comment>
<comment type="subunit">
    <text evidence="2">Component of the commander complex consisting of the CCC subcomplex and the retriever subcomplex (By similarity). Component of the heterotrimeric retriever complex formed by vps26c, vps29 and vps35l; within the complex interacts with vps35l (By similarity). Component of the heterotrimeric retromer cargo-selective complex (CSC), also described as vacuolar protein sorting subcomplex (VPS), formed by vps26 (vps26a or vps26b), vps29 and vps35 (By similarity). The CSC has a highly elongated structure with vps26 and vps29 binding independently at opposite distal ends of vps35 as central platform (By similarity).</text>
</comment>
<comment type="subcellular location">
    <subcellularLocation>
        <location>Cytoplasm</location>
    </subcellularLocation>
    <subcellularLocation>
        <location>Membrane</location>
        <topology>Peripheral membrane protein</topology>
    </subcellularLocation>
    <subcellularLocation>
        <location evidence="1">Endosome membrane</location>
        <topology evidence="1">Peripheral membrane protein</topology>
    </subcellularLocation>
</comment>
<comment type="similarity">
    <text evidence="3">Belongs to the VPS29 family.</text>
</comment>